<name>ALF2_CUPNH</name>
<feature type="chain" id="PRO_0000178728" description="Fructose-bisphosphate aldolase, plasmid">
    <location>
        <begin position="1"/>
        <end position="345"/>
    </location>
</feature>
<feature type="active site" description="Proton donor" evidence="1">
    <location>
        <position position="83"/>
    </location>
</feature>
<feature type="binding site" evidence="1">
    <location>
        <position position="50"/>
    </location>
    <ligand>
        <name>D-glyceraldehyde 3-phosphate</name>
        <dbReference type="ChEBI" id="CHEBI:59776"/>
    </ligand>
</feature>
<feature type="binding site" evidence="1">
    <location>
        <position position="84"/>
    </location>
    <ligand>
        <name>Zn(2+)</name>
        <dbReference type="ChEBI" id="CHEBI:29105"/>
        <label>1</label>
        <note>catalytic</note>
    </ligand>
</feature>
<feature type="binding site" evidence="1">
    <location>
        <position position="105"/>
    </location>
    <ligand>
        <name>Zn(2+)</name>
        <dbReference type="ChEBI" id="CHEBI:29105"/>
        <label>2</label>
    </ligand>
</feature>
<feature type="binding site" evidence="1">
    <location>
        <position position="142"/>
    </location>
    <ligand>
        <name>Zn(2+)</name>
        <dbReference type="ChEBI" id="CHEBI:29105"/>
        <label>2</label>
    </ligand>
</feature>
<feature type="binding site" evidence="1">
    <location>
        <position position="198"/>
    </location>
    <ligand>
        <name>Zn(2+)</name>
        <dbReference type="ChEBI" id="CHEBI:29105"/>
        <label>1</label>
        <note>catalytic</note>
    </ligand>
</feature>
<feature type="binding site" evidence="1">
    <location>
        <position position="199"/>
    </location>
    <ligand>
        <name>dihydroxyacetone phosphate</name>
        <dbReference type="ChEBI" id="CHEBI:57642"/>
    </ligand>
</feature>
<feature type="binding site" evidence="1">
    <location>
        <position position="232"/>
    </location>
    <ligand>
        <name>Zn(2+)</name>
        <dbReference type="ChEBI" id="CHEBI:29105"/>
        <label>1</label>
        <note>catalytic</note>
    </ligand>
</feature>
<feature type="binding site" evidence="1">
    <location>
        <begin position="233"/>
        <end position="235"/>
    </location>
    <ligand>
        <name>dihydroxyacetone phosphate</name>
        <dbReference type="ChEBI" id="CHEBI:57642"/>
    </ligand>
</feature>
<feature type="binding site" evidence="1">
    <location>
        <begin position="275"/>
        <end position="278"/>
    </location>
    <ligand>
        <name>dihydroxyacetone phosphate</name>
        <dbReference type="ChEBI" id="CHEBI:57642"/>
    </ligand>
</feature>
<feature type="sequence conflict" description="In Ref. 1; AAC43448." evidence="2" ref="1">
    <original>T</original>
    <variation>I</variation>
    <location>
        <position position="285"/>
    </location>
</feature>
<evidence type="ECO:0000250" key="1"/>
<evidence type="ECO:0000305" key="2"/>
<gene>
    <name type="primary">cbbAP</name>
    <name type="ordered locus">PHG416</name>
</gene>
<sequence>MALISLRQLLDHAGEFGYGVPAFNVNNLEQIHAIMEAAEETDSPVILQASAGARKYAGEAYLRHMVLAAAETHPDIPIVLHQDHGSSPAVCQASIRSGFTSVMMDGSLREDMKTPSDYDYNVDVTRRVCEMAHAVGVSVEGELGCLGSLETGQAGEEDGVGAAGTLSHDMMLTDPAQARDFVARTGVDALAIAIGTSHGAYKFSRKPTGDILAIDRIREIHEQIPDTHLVMHGSSSVPQEWLEIIRQYGGDIKETYGVPVEEILRGIKTGVRKVNIDTDIRLAMTGAIRKSLAEDRSEFDPRKALLAAKKGARSVVKLRFEAFGCAGQASKIKPIAMEQLAQWYR</sequence>
<accession>Q59101</accession>
<accession>Q7WWS6</accession>
<geneLocation type="plasmid">
    <name>megaplasmid pHG1</name>
</geneLocation>
<comment type="function">
    <text evidence="1">Catalyzes the aldol condensation of dihydroxyacetone phosphate (DHAP or glycerone-phosphate) with glyceraldehyde 3-phosphate (G3P) to form fructose 1,6-bisphosphate (FBP) in gluconeogenesis and the reverse reaction in glycolysis.</text>
</comment>
<comment type="catalytic activity">
    <reaction>
        <text>beta-D-fructose 1,6-bisphosphate = D-glyceraldehyde 3-phosphate + dihydroxyacetone phosphate</text>
        <dbReference type="Rhea" id="RHEA:14729"/>
        <dbReference type="ChEBI" id="CHEBI:32966"/>
        <dbReference type="ChEBI" id="CHEBI:57642"/>
        <dbReference type="ChEBI" id="CHEBI:59776"/>
        <dbReference type="EC" id="4.1.2.13"/>
    </reaction>
</comment>
<comment type="cofactor">
    <cofactor evidence="1">
        <name>Zn(2+)</name>
        <dbReference type="ChEBI" id="CHEBI:29105"/>
    </cofactor>
    <text evidence="1">Binds 2 Zn(2+) ions per subunit. One is catalytic and the other provides a structural contribution.</text>
</comment>
<comment type="pathway">
    <text>Carbohydrate biosynthesis; Calvin cycle.</text>
</comment>
<comment type="pathway">
    <text>Carbohydrate degradation; glycolysis; D-glyceraldehyde 3-phosphate and glycerone phosphate from D-glucose: step 4/4.</text>
</comment>
<comment type="subunit">
    <text evidence="1">Homodimer.</text>
</comment>
<comment type="similarity">
    <text evidence="2">Belongs to the class II fructose-bisphosphate aldolase family.</text>
</comment>
<keyword id="KW-0113">Calvin cycle</keyword>
<keyword id="KW-0324">Glycolysis</keyword>
<keyword id="KW-0456">Lyase</keyword>
<keyword id="KW-0479">Metal-binding</keyword>
<keyword id="KW-0614">Plasmid</keyword>
<keyword id="KW-1185">Reference proteome</keyword>
<keyword id="KW-0862">Zinc</keyword>
<proteinExistence type="inferred from homology"/>
<reference key="1">
    <citation type="journal article" date="1995" name="Arch. Microbiol.">
        <title>Analysis of the genes forming the distal parts of the two cbb CO2 fixation operons from Alcaligenes eutrophus.</title>
        <authorList>
            <person name="Schaeferfohann J."/>
            <person name="Yoo J.-G."/>
            <person name="Bowien B."/>
        </authorList>
    </citation>
    <scope>NUCLEOTIDE SEQUENCE [GENOMIC DNA]</scope>
</reference>
<reference key="2">
    <citation type="journal article" date="2003" name="J. Mol. Biol.">
        <title>Complete nucleotide sequence of pHG1: a Ralstonia eutropha H16 megaplasmid encoding key enzymes of H(2)-based lithoautotrophy and anaerobiosis.</title>
        <authorList>
            <person name="Schwartz E."/>
            <person name="Henne A."/>
            <person name="Cramm R."/>
            <person name="Eitinger T."/>
            <person name="Friedrich B."/>
            <person name="Gottschalk G."/>
        </authorList>
    </citation>
    <scope>NUCLEOTIDE SEQUENCE [LARGE SCALE GENOMIC DNA]</scope>
    <source>
        <strain>ATCC 17699 / DSM 428 / KCTC 22496 / NCIMB 10442 / H16 / Stanier 337</strain>
    </source>
</reference>
<organism>
    <name type="scientific">Cupriavidus necator (strain ATCC 17699 / DSM 428 / KCTC 22496 / NCIMB 10442 / H16 / Stanier 337)</name>
    <name type="common">Ralstonia eutropha</name>
    <dbReference type="NCBI Taxonomy" id="381666"/>
    <lineage>
        <taxon>Bacteria</taxon>
        <taxon>Pseudomonadati</taxon>
        <taxon>Pseudomonadota</taxon>
        <taxon>Betaproteobacteria</taxon>
        <taxon>Burkholderiales</taxon>
        <taxon>Burkholderiaceae</taxon>
        <taxon>Cupriavidus</taxon>
    </lineage>
</organism>
<dbReference type="EC" id="4.1.2.13"/>
<dbReference type="EMBL" id="U12423">
    <property type="protein sequence ID" value="AAC43448.1"/>
    <property type="molecule type" value="Genomic_DNA"/>
</dbReference>
<dbReference type="EMBL" id="AY305378">
    <property type="protein sequence ID" value="AAP86165.1"/>
    <property type="molecule type" value="Genomic_DNA"/>
</dbReference>
<dbReference type="PIR" id="I39555">
    <property type="entry name" value="I39555"/>
</dbReference>
<dbReference type="RefSeq" id="WP_011154328.1">
    <property type="nucleotide sequence ID" value="NC_005241.1"/>
</dbReference>
<dbReference type="SMR" id="Q59101"/>
<dbReference type="KEGG" id="reh:PHG416"/>
<dbReference type="PATRIC" id="fig|381666.6.peg.344"/>
<dbReference type="eggNOG" id="COG0191">
    <property type="taxonomic scope" value="Bacteria"/>
</dbReference>
<dbReference type="HOGENOM" id="CLU_040088_0_0_4"/>
<dbReference type="OrthoDB" id="9803995at2"/>
<dbReference type="UniPathway" id="UPA00109">
    <property type="reaction ID" value="UER00183"/>
</dbReference>
<dbReference type="UniPathway" id="UPA00116"/>
<dbReference type="Proteomes" id="UP000008210">
    <property type="component" value="Plasmid megaplasmid pHG1"/>
</dbReference>
<dbReference type="GO" id="GO:0004332">
    <property type="term" value="F:fructose-bisphosphate aldolase activity"/>
    <property type="evidence" value="ECO:0007669"/>
    <property type="project" value="UniProtKB-EC"/>
</dbReference>
<dbReference type="GO" id="GO:0008270">
    <property type="term" value="F:zinc ion binding"/>
    <property type="evidence" value="ECO:0007669"/>
    <property type="project" value="InterPro"/>
</dbReference>
<dbReference type="GO" id="GO:0006096">
    <property type="term" value="P:glycolytic process"/>
    <property type="evidence" value="ECO:0007669"/>
    <property type="project" value="UniProtKB-UniPathway"/>
</dbReference>
<dbReference type="GO" id="GO:0019253">
    <property type="term" value="P:reductive pentose-phosphate cycle"/>
    <property type="evidence" value="ECO:0007669"/>
    <property type="project" value="UniProtKB-UniPathway"/>
</dbReference>
<dbReference type="CDD" id="cd00947">
    <property type="entry name" value="TBP_aldolase_IIB"/>
    <property type="match status" value="1"/>
</dbReference>
<dbReference type="FunFam" id="3.20.20.70:FF:000111">
    <property type="entry name" value="Fructose-1,6-bisphosphate aldolase"/>
    <property type="match status" value="1"/>
</dbReference>
<dbReference type="Gene3D" id="3.20.20.70">
    <property type="entry name" value="Aldolase class I"/>
    <property type="match status" value="1"/>
</dbReference>
<dbReference type="InterPro" id="IPR013785">
    <property type="entry name" value="Aldolase_TIM"/>
</dbReference>
<dbReference type="InterPro" id="IPR050246">
    <property type="entry name" value="Class_II_FBP_aldolase"/>
</dbReference>
<dbReference type="InterPro" id="IPR000771">
    <property type="entry name" value="FBA_II"/>
</dbReference>
<dbReference type="InterPro" id="IPR006412">
    <property type="entry name" value="Fruct_bisP_Calv"/>
</dbReference>
<dbReference type="NCBIfam" id="TIGR00167">
    <property type="entry name" value="cbbA"/>
    <property type="match status" value="1"/>
</dbReference>
<dbReference type="NCBIfam" id="TIGR01521">
    <property type="entry name" value="FruBisAldo_II_B"/>
    <property type="match status" value="1"/>
</dbReference>
<dbReference type="PANTHER" id="PTHR30304">
    <property type="entry name" value="D-TAGATOSE-1,6-BISPHOSPHATE ALDOLASE"/>
    <property type="match status" value="1"/>
</dbReference>
<dbReference type="PANTHER" id="PTHR30304:SF0">
    <property type="entry name" value="D-TAGATOSE-1,6-BISPHOSPHATE ALDOLASE SUBUNIT GATY-RELATED"/>
    <property type="match status" value="1"/>
</dbReference>
<dbReference type="Pfam" id="PF01116">
    <property type="entry name" value="F_bP_aldolase"/>
    <property type="match status" value="1"/>
</dbReference>
<dbReference type="PIRSF" id="PIRSF001359">
    <property type="entry name" value="F_bP_aldolase_II"/>
    <property type="match status" value="1"/>
</dbReference>
<dbReference type="SUPFAM" id="SSF51569">
    <property type="entry name" value="Aldolase"/>
    <property type="match status" value="1"/>
</dbReference>
<dbReference type="PROSITE" id="PS00602">
    <property type="entry name" value="ALDOLASE_CLASS_II_1"/>
    <property type="match status" value="1"/>
</dbReference>
<dbReference type="PROSITE" id="PS00806">
    <property type="entry name" value="ALDOLASE_CLASS_II_2"/>
    <property type="match status" value="1"/>
</dbReference>
<protein>
    <recommendedName>
        <fullName>Fructose-bisphosphate aldolase, plasmid</fullName>
        <shortName>FBP aldolase</shortName>
        <shortName>FBPA</shortName>
        <ecNumber>4.1.2.13</ecNumber>
    </recommendedName>
    <alternativeName>
        <fullName>Fructose-1,6-bisphosphate aldolase</fullName>
    </alternativeName>
</protein>